<proteinExistence type="inferred from homology"/>
<protein>
    <recommendedName>
        <fullName evidence="1">ATP synthase subunit c, chloroplastic</fullName>
    </recommendedName>
    <alternativeName>
        <fullName evidence="1">ATP synthase F(0) sector subunit c</fullName>
    </alternativeName>
    <alternativeName>
        <fullName evidence="1">ATPase subunit III</fullName>
    </alternativeName>
    <alternativeName>
        <fullName evidence="1">F-type ATPase subunit c</fullName>
        <shortName evidence="1">F-ATPase subunit c</shortName>
    </alternativeName>
    <alternativeName>
        <fullName evidence="1">Lipid-binding protein</fullName>
    </alternativeName>
</protein>
<reference key="1">
    <citation type="journal article" date="2003" name="Mol. Biol. Evol.">
        <title>Analysis of the Amborella trichopoda chloroplast genome sequence suggests that Amborella is not a basal angiosperm.</title>
        <authorList>
            <person name="Goremykin V.V."/>
            <person name="Hirsch-Ernst K.I."/>
            <person name="Wolfl S."/>
            <person name="Hellwig F.H."/>
        </authorList>
    </citation>
    <scope>NUCLEOTIDE SEQUENCE [LARGE SCALE GENOMIC DNA]</scope>
</reference>
<organism>
    <name type="scientific">Amborella trichopoda</name>
    <dbReference type="NCBI Taxonomy" id="13333"/>
    <lineage>
        <taxon>Eukaryota</taxon>
        <taxon>Viridiplantae</taxon>
        <taxon>Streptophyta</taxon>
        <taxon>Embryophyta</taxon>
        <taxon>Tracheophyta</taxon>
        <taxon>Spermatophyta</taxon>
        <taxon>Magnoliopsida</taxon>
        <taxon>Amborellales</taxon>
        <taxon>Amborellaceae</taxon>
        <taxon>Amborella</taxon>
    </lineage>
</organism>
<feature type="chain" id="PRO_0000362884" description="ATP synthase subunit c, chloroplastic">
    <location>
        <begin position="1"/>
        <end position="81"/>
    </location>
</feature>
<feature type="transmembrane region" description="Helical" evidence="1">
    <location>
        <begin position="3"/>
        <end position="23"/>
    </location>
</feature>
<feature type="transmembrane region" description="Helical" evidence="1">
    <location>
        <begin position="57"/>
        <end position="77"/>
    </location>
</feature>
<feature type="site" description="Reversibly protonated during proton transport" evidence="1">
    <location>
        <position position="61"/>
    </location>
</feature>
<keyword id="KW-0066">ATP synthesis</keyword>
<keyword id="KW-0138">CF(0)</keyword>
<keyword id="KW-0150">Chloroplast</keyword>
<keyword id="KW-0375">Hydrogen ion transport</keyword>
<keyword id="KW-0406">Ion transport</keyword>
<keyword id="KW-0446">Lipid-binding</keyword>
<keyword id="KW-0472">Membrane</keyword>
<keyword id="KW-0934">Plastid</keyword>
<keyword id="KW-1185">Reference proteome</keyword>
<keyword id="KW-0793">Thylakoid</keyword>
<keyword id="KW-0812">Transmembrane</keyword>
<keyword id="KW-1133">Transmembrane helix</keyword>
<keyword id="KW-0813">Transport</keyword>
<gene>
    <name evidence="1" type="primary">atpH</name>
</gene>
<comment type="function">
    <text evidence="1">F(1)F(0) ATP synthase produces ATP from ADP in the presence of a proton or sodium gradient. F-type ATPases consist of two structural domains, F(1) containing the extramembraneous catalytic core and F(0) containing the membrane proton channel, linked together by a central stalk and a peripheral stalk. During catalysis, ATP synthesis in the catalytic domain of F(1) is coupled via a rotary mechanism of the central stalk subunits to proton translocation.</text>
</comment>
<comment type="function">
    <text evidence="1">Key component of the F(0) channel; it plays a direct role in translocation across the membrane. A homomeric c-ring of between 10-14 subunits forms the central stalk rotor element with the F(1) delta and epsilon subunits.</text>
</comment>
<comment type="subunit">
    <text evidence="1">F-type ATPases have 2 components, F(1) - the catalytic core - and F(0) - the membrane proton channel. F(1) has five subunits: alpha(3), beta(3), gamma(1), delta(1), epsilon(1). F(0) has four main subunits: a(1), b(1), b'(1) and c(10-14). The alpha and beta chains form an alternating ring which encloses part of the gamma chain. F(1) is attached to F(0) by a central stalk formed by the gamma and epsilon chains, while a peripheral stalk is formed by the delta, b and b' chains.</text>
</comment>
<comment type="subcellular location">
    <subcellularLocation>
        <location evidence="1">Plastid</location>
        <location evidence="1">Chloroplast thylakoid membrane</location>
        <topology evidence="1">Multi-pass membrane protein</topology>
    </subcellularLocation>
</comment>
<comment type="miscellaneous">
    <text>In plastids the F-type ATPase is also known as CF(1)CF(0).</text>
</comment>
<comment type="similarity">
    <text evidence="1">Belongs to the ATPase C chain family.</text>
</comment>
<dbReference type="EMBL" id="AJ506156">
    <property type="protein sequence ID" value="CAD45095.2"/>
    <property type="molecule type" value="Genomic_DNA"/>
</dbReference>
<dbReference type="RefSeq" id="NP_904086.1">
    <property type="nucleotide sequence ID" value="NC_005086.1"/>
</dbReference>
<dbReference type="SMR" id="Q70Y12"/>
<dbReference type="STRING" id="13333.Q70Y12"/>
<dbReference type="GeneID" id="2546500"/>
<dbReference type="KEGG" id="atr:2546500"/>
<dbReference type="eggNOG" id="KOG0232">
    <property type="taxonomic scope" value="Eukaryota"/>
</dbReference>
<dbReference type="OrthoDB" id="438052at2759"/>
<dbReference type="Proteomes" id="UP000017836">
    <property type="component" value="Chloroplast"/>
</dbReference>
<dbReference type="GO" id="GO:0009535">
    <property type="term" value="C:chloroplast thylakoid membrane"/>
    <property type="evidence" value="ECO:0007669"/>
    <property type="project" value="UniProtKB-SubCell"/>
</dbReference>
<dbReference type="GO" id="GO:0045259">
    <property type="term" value="C:proton-transporting ATP synthase complex"/>
    <property type="evidence" value="ECO:0007669"/>
    <property type="project" value="UniProtKB-KW"/>
</dbReference>
<dbReference type="GO" id="GO:0033177">
    <property type="term" value="C:proton-transporting two-sector ATPase complex, proton-transporting domain"/>
    <property type="evidence" value="ECO:0007669"/>
    <property type="project" value="InterPro"/>
</dbReference>
<dbReference type="GO" id="GO:0008289">
    <property type="term" value="F:lipid binding"/>
    <property type="evidence" value="ECO:0007669"/>
    <property type="project" value="UniProtKB-KW"/>
</dbReference>
<dbReference type="GO" id="GO:0046933">
    <property type="term" value="F:proton-transporting ATP synthase activity, rotational mechanism"/>
    <property type="evidence" value="ECO:0007669"/>
    <property type="project" value="UniProtKB-UniRule"/>
</dbReference>
<dbReference type="GO" id="GO:0015986">
    <property type="term" value="P:proton motive force-driven ATP synthesis"/>
    <property type="evidence" value="ECO:0000318"/>
    <property type="project" value="GO_Central"/>
</dbReference>
<dbReference type="CDD" id="cd18183">
    <property type="entry name" value="ATP-synt_Fo_c_ATPH"/>
    <property type="match status" value="1"/>
</dbReference>
<dbReference type="FunFam" id="1.20.20.10:FF:000001">
    <property type="entry name" value="ATP synthase subunit c, chloroplastic"/>
    <property type="match status" value="1"/>
</dbReference>
<dbReference type="Gene3D" id="1.20.20.10">
    <property type="entry name" value="F1F0 ATP synthase subunit C"/>
    <property type="match status" value="1"/>
</dbReference>
<dbReference type="HAMAP" id="MF_01396">
    <property type="entry name" value="ATP_synth_c_bact"/>
    <property type="match status" value="1"/>
</dbReference>
<dbReference type="InterPro" id="IPR005953">
    <property type="entry name" value="ATP_synth_csu_bac/chlpt"/>
</dbReference>
<dbReference type="InterPro" id="IPR000454">
    <property type="entry name" value="ATP_synth_F0_csu"/>
</dbReference>
<dbReference type="InterPro" id="IPR020537">
    <property type="entry name" value="ATP_synth_F0_csu_DDCD_BS"/>
</dbReference>
<dbReference type="InterPro" id="IPR038662">
    <property type="entry name" value="ATP_synth_F0_csu_sf"/>
</dbReference>
<dbReference type="InterPro" id="IPR002379">
    <property type="entry name" value="ATPase_proteolipid_c-like_dom"/>
</dbReference>
<dbReference type="InterPro" id="IPR035921">
    <property type="entry name" value="F/V-ATP_Csub_sf"/>
</dbReference>
<dbReference type="NCBIfam" id="TIGR01260">
    <property type="entry name" value="ATP_synt_c"/>
    <property type="match status" value="1"/>
</dbReference>
<dbReference type="NCBIfam" id="NF005608">
    <property type="entry name" value="PRK07354.1"/>
    <property type="match status" value="1"/>
</dbReference>
<dbReference type="PANTHER" id="PTHR10031">
    <property type="entry name" value="ATP SYNTHASE LIPID-BINDING PROTEIN, MITOCHONDRIAL"/>
    <property type="match status" value="1"/>
</dbReference>
<dbReference type="PANTHER" id="PTHR10031:SF0">
    <property type="entry name" value="ATPASE PROTEIN 9"/>
    <property type="match status" value="1"/>
</dbReference>
<dbReference type="Pfam" id="PF00137">
    <property type="entry name" value="ATP-synt_C"/>
    <property type="match status" value="1"/>
</dbReference>
<dbReference type="PRINTS" id="PR00124">
    <property type="entry name" value="ATPASEC"/>
</dbReference>
<dbReference type="SUPFAM" id="SSF81333">
    <property type="entry name" value="F1F0 ATP synthase subunit C"/>
    <property type="match status" value="1"/>
</dbReference>
<dbReference type="PROSITE" id="PS00605">
    <property type="entry name" value="ATPASE_C"/>
    <property type="match status" value="1"/>
</dbReference>
<accession>Q70Y12</accession>
<sequence length="81" mass="7990">MNPLISAASVIAAGLAVGLASIGPGVGQGTAAGQAVEGIARQPEAEGKIRGTLLLSLAFMEALTIYGLVVALALLFANPFV</sequence>
<geneLocation type="chloroplast"/>
<evidence type="ECO:0000255" key="1">
    <source>
        <dbReference type="HAMAP-Rule" id="MF_01396"/>
    </source>
</evidence>
<name>ATPH_AMBTC</name>